<name>RL34_BORGP</name>
<keyword id="KW-0687">Ribonucleoprotein</keyword>
<keyword id="KW-0689">Ribosomal protein</keyword>
<dbReference type="EMBL" id="CP000013">
    <property type="protein sequence ID" value="AAU07290.1"/>
    <property type="molecule type" value="Genomic_DNA"/>
</dbReference>
<dbReference type="RefSeq" id="WP_011193760.1">
    <property type="nucleotide sequence ID" value="NZ_CP028872.1"/>
</dbReference>
<dbReference type="SMR" id="Q661I1"/>
<dbReference type="GeneID" id="45161232"/>
<dbReference type="KEGG" id="bga:BG0447"/>
<dbReference type="eggNOG" id="COG0230">
    <property type="taxonomic scope" value="Bacteria"/>
</dbReference>
<dbReference type="HOGENOM" id="CLU_129938_2_0_12"/>
<dbReference type="OrthoDB" id="9804164at2"/>
<dbReference type="Proteomes" id="UP000002276">
    <property type="component" value="Chromosome"/>
</dbReference>
<dbReference type="GO" id="GO:1990904">
    <property type="term" value="C:ribonucleoprotein complex"/>
    <property type="evidence" value="ECO:0007669"/>
    <property type="project" value="UniProtKB-KW"/>
</dbReference>
<dbReference type="GO" id="GO:0005840">
    <property type="term" value="C:ribosome"/>
    <property type="evidence" value="ECO:0007669"/>
    <property type="project" value="UniProtKB-KW"/>
</dbReference>
<dbReference type="GO" id="GO:0003735">
    <property type="term" value="F:structural constituent of ribosome"/>
    <property type="evidence" value="ECO:0007669"/>
    <property type="project" value="InterPro"/>
</dbReference>
<dbReference type="GO" id="GO:0006412">
    <property type="term" value="P:translation"/>
    <property type="evidence" value="ECO:0007669"/>
    <property type="project" value="UniProtKB-UniRule"/>
</dbReference>
<dbReference type="FunFam" id="1.10.287.3980:FF:000001">
    <property type="entry name" value="Mitochondrial ribosomal protein L34"/>
    <property type="match status" value="1"/>
</dbReference>
<dbReference type="Gene3D" id="1.10.287.3980">
    <property type="match status" value="1"/>
</dbReference>
<dbReference type="HAMAP" id="MF_00391">
    <property type="entry name" value="Ribosomal_bL34"/>
    <property type="match status" value="1"/>
</dbReference>
<dbReference type="InterPro" id="IPR000271">
    <property type="entry name" value="Ribosomal_bL34"/>
</dbReference>
<dbReference type="InterPro" id="IPR020939">
    <property type="entry name" value="Ribosomal_bL34_CS"/>
</dbReference>
<dbReference type="NCBIfam" id="TIGR01030">
    <property type="entry name" value="rpmH_bact"/>
    <property type="match status" value="1"/>
</dbReference>
<dbReference type="PANTHER" id="PTHR14503:SF4">
    <property type="entry name" value="LARGE RIBOSOMAL SUBUNIT PROTEIN BL34M"/>
    <property type="match status" value="1"/>
</dbReference>
<dbReference type="PANTHER" id="PTHR14503">
    <property type="entry name" value="MITOCHONDRIAL RIBOSOMAL PROTEIN 34 FAMILY MEMBER"/>
    <property type="match status" value="1"/>
</dbReference>
<dbReference type="Pfam" id="PF00468">
    <property type="entry name" value="Ribosomal_L34"/>
    <property type="match status" value="1"/>
</dbReference>
<dbReference type="PROSITE" id="PS00784">
    <property type="entry name" value="RIBOSOMAL_L34"/>
    <property type="match status" value="1"/>
</dbReference>
<organism>
    <name type="scientific">Borrelia garinii subsp. bavariensis (strain ATCC BAA-2496 / DSM 23469 / PBi)</name>
    <name type="common">Borreliella bavariensis</name>
    <dbReference type="NCBI Taxonomy" id="290434"/>
    <lineage>
        <taxon>Bacteria</taxon>
        <taxon>Pseudomonadati</taxon>
        <taxon>Spirochaetota</taxon>
        <taxon>Spirochaetia</taxon>
        <taxon>Spirochaetales</taxon>
        <taxon>Borreliaceae</taxon>
        <taxon>Borreliella</taxon>
    </lineage>
</organism>
<accession>Q661I1</accession>
<proteinExistence type="inferred from homology"/>
<comment type="similarity">
    <text evidence="1">Belongs to the bacterial ribosomal protein bL34 family.</text>
</comment>
<protein>
    <recommendedName>
        <fullName evidence="1">Large ribosomal subunit protein bL34</fullName>
    </recommendedName>
    <alternativeName>
        <fullName evidence="2">50S ribosomal protein L34</fullName>
    </alternativeName>
</protein>
<feature type="chain" id="PRO_0000187348" description="Large ribosomal subunit protein bL34">
    <location>
        <begin position="1"/>
        <end position="51"/>
    </location>
</feature>
<reference key="1">
    <citation type="journal article" date="2004" name="Nucleic Acids Res.">
        <title>Comparative analysis of the Borrelia garinii genome.</title>
        <authorList>
            <person name="Gloeckner G."/>
            <person name="Lehmann R."/>
            <person name="Romualdi A."/>
            <person name="Pradella S."/>
            <person name="Schulte-Spechtel U."/>
            <person name="Schilhabel M."/>
            <person name="Wilske B."/>
            <person name="Suehnel J."/>
            <person name="Platzer M."/>
        </authorList>
    </citation>
    <scope>NUCLEOTIDE SEQUENCE [LARGE SCALE GENOMIC DNA]</scope>
    <source>
        <strain>ATCC BAA-2496 / DSM 23469 / PBi</strain>
    </source>
</reference>
<evidence type="ECO:0000255" key="1">
    <source>
        <dbReference type="HAMAP-Rule" id="MF_00391"/>
    </source>
</evidence>
<evidence type="ECO:0000305" key="2"/>
<gene>
    <name evidence="1" type="primary">rpmH</name>
    <name type="ordered locus">BG0447</name>
</gene>
<sequence>MKRTYQPSRVKRNRKFGFRARMKTKGGRLILARRRAKGRMKLTVSDEKKKY</sequence>